<name>RCF1_ASPOR</name>
<reference key="1">
    <citation type="journal article" date="2005" name="Nature">
        <title>Genome sequencing and analysis of Aspergillus oryzae.</title>
        <authorList>
            <person name="Machida M."/>
            <person name="Asai K."/>
            <person name="Sano M."/>
            <person name="Tanaka T."/>
            <person name="Kumagai T."/>
            <person name="Terai G."/>
            <person name="Kusumoto K."/>
            <person name="Arima T."/>
            <person name="Akita O."/>
            <person name="Kashiwagi Y."/>
            <person name="Abe K."/>
            <person name="Gomi K."/>
            <person name="Horiuchi H."/>
            <person name="Kitamoto K."/>
            <person name="Kobayashi T."/>
            <person name="Takeuchi M."/>
            <person name="Denning D.W."/>
            <person name="Galagan J.E."/>
            <person name="Nierman W.C."/>
            <person name="Yu J."/>
            <person name="Archer D.B."/>
            <person name="Bennett J.W."/>
            <person name="Bhatnagar D."/>
            <person name="Cleveland T.E."/>
            <person name="Fedorova N.D."/>
            <person name="Gotoh O."/>
            <person name="Horikawa H."/>
            <person name="Hosoyama A."/>
            <person name="Ichinomiya M."/>
            <person name="Igarashi R."/>
            <person name="Iwashita K."/>
            <person name="Juvvadi P.R."/>
            <person name="Kato M."/>
            <person name="Kato Y."/>
            <person name="Kin T."/>
            <person name="Kokubun A."/>
            <person name="Maeda H."/>
            <person name="Maeyama N."/>
            <person name="Maruyama J."/>
            <person name="Nagasaki H."/>
            <person name="Nakajima T."/>
            <person name="Oda K."/>
            <person name="Okada K."/>
            <person name="Paulsen I."/>
            <person name="Sakamoto K."/>
            <person name="Sawano T."/>
            <person name="Takahashi M."/>
            <person name="Takase K."/>
            <person name="Terabayashi Y."/>
            <person name="Wortman J.R."/>
            <person name="Yamada O."/>
            <person name="Yamagata Y."/>
            <person name="Anazawa H."/>
            <person name="Hata Y."/>
            <person name="Koide Y."/>
            <person name="Komori T."/>
            <person name="Koyama Y."/>
            <person name="Minetoki T."/>
            <person name="Suharnan S."/>
            <person name="Tanaka A."/>
            <person name="Isono K."/>
            <person name="Kuhara S."/>
            <person name="Ogasawara N."/>
            <person name="Kikuchi H."/>
        </authorList>
    </citation>
    <scope>NUCLEOTIDE SEQUENCE [LARGE SCALE GENOMIC DNA]</scope>
    <source>
        <strain>ATCC 42149 / RIB 40</strain>
    </source>
</reference>
<comment type="function">
    <text evidence="1">Cytochrome c oxidase subunit which plays a role in assembly of respiratory supercomplexes.</text>
</comment>
<comment type="subunit">
    <text evidence="1">Associates with the respiratory chain complex III/complex IV supercomplex.</text>
</comment>
<comment type="subcellular location">
    <subcellularLocation>
        <location evidence="2">Mitochondrion membrane</location>
        <topology evidence="2">Multi-pass membrane protein</topology>
    </subcellularLocation>
</comment>
<comment type="similarity">
    <text evidence="4">Belongs to the RCF1 family.</text>
</comment>
<proteinExistence type="inferred from homology"/>
<protein>
    <recommendedName>
        <fullName>Respiratory supercomplex factor 1, mitochondrial</fullName>
    </recommendedName>
</protein>
<feature type="chain" id="PRO_0000399620" description="Respiratory supercomplex factor 1, mitochondrial">
    <location>
        <begin position="1"/>
        <end position="176"/>
    </location>
</feature>
<feature type="transmembrane region" description="Helical" evidence="2">
    <location>
        <begin position="33"/>
        <end position="49"/>
    </location>
</feature>
<feature type="transmembrane region" description="Helical" evidence="2">
    <location>
        <begin position="69"/>
        <end position="86"/>
    </location>
</feature>
<feature type="domain" description="HIG1" evidence="2">
    <location>
        <begin position="6"/>
        <end position="97"/>
    </location>
</feature>
<feature type="region of interest" description="Disordered" evidence="3">
    <location>
        <begin position="129"/>
        <end position="158"/>
    </location>
</feature>
<feature type="compositionally biased region" description="Basic and acidic residues" evidence="3">
    <location>
        <begin position="140"/>
        <end position="158"/>
    </location>
</feature>
<organism>
    <name type="scientific">Aspergillus oryzae (strain ATCC 42149 / RIB 40)</name>
    <name type="common">Yellow koji mold</name>
    <dbReference type="NCBI Taxonomy" id="510516"/>
    <lineage>
        <taxon>Eukaryota</taxon>
        <taxon>Fungi</taxon>
        <taxon>Dikarya</taxon>
        <taxon>Ascomycota</taxon>
        <taxon>Pezizomycotina</taxon>
        <taxon>Eurotiomycetes</taxon>
        <taxon>Eurotiomycetidae</taxon>
        <taxon>Eurotiales</taxon>
        <taxon>Aspergillaceae</taxon>
        <taxon>Aspergillus</taxon>
        <taxon>Aspergillus subgen. Circumdati</taxon>
    </lineage>
</organism>
<accession>Q2UGQ3</accession>
<dbReference type="EMBL" id="BA000051">
    <property type="protein sequence ID" value="BAE59262.1"/>
    <property type="molecule type" value="Genomic_DNA"/>
</dbReference>
<dbReference type="RefSeq" id="XP_001821264.1">
    <property type="nucleotide sequence ID" value="XM_001821212.2"/>
</dbReference>
<dbReference type="STRING" id="510516.Q2UGQ3"/>
<dbReference type="EnsemblFungi" id="BAE59262">
    <property type="protein sequence ID" value="BAE59262"/>
    <property type="gene ID" value="AO090023000757"/>
</dbReference>
<dbReference type="GeneID" id="5993266"/>
<dbReference type="KEGG" id="aor:AO090023000757"/>
<dbReference type="VEuPathDB" id="FungiDB:AO090023000757"/>
<dbReference type="HOGENOM" id="CLU_087356_0_2_1"/>
<dbReference type="OMA" id="QRWIREL"/>
<dbReference type="OrthoDB" id="108339at5052"/>
<dbReference type="Proteomes" id="UP000006564">
    <property type="component" value="Chromosome 3"/>
</dbReference>
<dbReference type="GO" id="GO:0031966">
    <property type="term" value="C:mitochondrial membrane"/>
    <property type="evidence" value="ECO:0007669"/>
    <property type="project" value="UniProtKB-SubCell"/>
</dbReference>
<dbReference type="GO" id="GO:0097250">
    <property type="term" value="P:mitochondrial respirasome assembly"/>
    <property type="evidence" value="ECO:0007669"/>
    <property type="project" value="TreeGrafter"/>
</dbReference>
<dbReference type="Gene3D" id="6.10.140.1320">
    <property type="match status" value="1"/>
</dbReference>
<dbReference type="InterPro" id="IPR007667">
    <property type="entry name" value="Hypoxia_induced_domain"/>
</dbReference>
<dbReference type="InterPro" id="IPR050355">
    <property type="entry name" value="RCF1"/>
</dbReference>
<dbReference type="PANTHER" id="PTHR12297:SF3">
    <property type="entry name" value="HIG1 DOMAIN FAMILY MEMBER 1A"/>
    <property type="match status" value="1"/>
</dbReference>
<dbReference type="PANTHER" id="PTHR12297">
    <property type="entry name" value="HYPOXIA-INDUCBILE GENE 1 HIG1 -RELATED"/>
    <property type="match status" value="1"/>
</dbReference>
<dbReference type="Pfam" id="PF04588">
    <property type="entry name" value="HIG_1_N"/>
    <property type="match status" value="1"/>
</dbReference>
<dbReference type="PROSITE" id="PS51503">
    <property type="entry name" value="HIG1"/>
    <property type="match status" value="1"/>
</dbReference>
<gene>
    <name type="primary">rcf1</name>
    <name type="synonym">aim31</name>
    <name type="ORF">AO090023000757</name>
</gene>
<sequence>MSSDPVPSSFEGNPQFEEETSLQKFRRRLKEEPLIPLGCAATSYALYRAYRSMKAGDSVEMNRMFRARIYAQFFTLIAVVVGGMYFKTERQQRKEFERMVEERKSQEKRDAWLRELEIRDKEDKDWRQRHAAMEAAAAEAGKKTAPHDAARSAIERSEEKSIGVLDAVKELLSRRN</sequence>
<keyword id="KW-0472">Membrane</keyword>
<keyword id="KW-0496">Mitochondrion</keyword>
<keyword id="KW-1185">Reference proteome</keyword>
<keyword id="KW-0812">Transmembrane</keyword>
<keyword id="KW-1133">Transmembrane helix</keyword>
<evidence type="ECO:0000250" key="1"/>
<evidence type="ECO:0000255" key="2">
    <source>
        <dbReference type="PROSITE-ProRule" id="PRU00836"/>
    </source>
</evidence>
<evidence type="ECO:0000256" key="3">
    <source>
        <dbReference type="SAM" id="MobiDB-lite"/>
    </source>
</evidence>
<evidence type="ECO:0000305" key="4"/>